<name>CAPSD_PEMVW</name>
<accession>P29153</accession>
<comment type="function">
    <text>Major capsid protein.</text>
</comment>
<comment type="subcellular location">
    <subcellularLocation>
        <location evidence="3">Virion</location>
    </subcellularLocation>
</comment>
<comment type="miscellaneous">
    <text>The N-terminal region like those of many plant virus capsid proteins is highly basic. It has been suggested that these regions may be involved in protein-RNA interaction.</text>
</comment>
<comment type="similarity">
    <text evidence="3">Belongs to the luteoviruses capsid protein family.</text>
</comment>
<feature type="initiator methionine" description="Removed; by host" evidence="2">
    <location>
        <position position="1"/>
    </location>
</feature>
<feature type="chain" id="PRO_0000222414" description="Major capsid protein">
    <location>
        <begin position="2"/>
        <end position="189"/>
    </location>
</feature>
<feature type="region of interest" description="Disordered" evidence="1">
    <location>
        <begin position="1"/>
        <end position="50"/>
    </location>
</feature>
<feature type="compositionally biased region" description="Basic residues" evidence="1">
    <location>
        <begin position="1"/>
        <end position="18"/>
    </location>
</feature>
<feature type="compositionally biased region" description="Basic residues" evidence="1">
    <location>
        <begin position="32"/>
        <end position="42"/>
    </location>
</feature>
<organism>
    <name type="scientific">Pea enation mosaic virus-1 (strain WSG)</name>
    <name type="common">PEMV-1</name>
    <dbReference type="NCBI Taxonomy" id="693989"/>
    <lineage>
        <taxon>Viruses</taxon>
        <taxon>Riboviria</taxon>
        <taxon>Orthornavirae</taxon>
        <taxon>Pisuviricota</taxon>
        <taxon>Pisoniviricetes</taxon>
        <taxon>Sobelivirales</taxon>
        <taxon>Solemoviridae</taxon>
        <taxon>Enamovirus</taxon>
        <taxon>Pea enation mosaic virus-1</taxon>
    </lineage>
</organism>
<organismHost>
    <name type="scientific">Cicer arietinum</name>
    <name type="common">Chickpea</name>
    <name type="synonym">Garbanzo</name>
    <dbReference type="NCBI Taxonomy" id="3827"/>
</organismHost>
<organismHost>
    <name type="scientific">Lathyrus odoratus</name>
    <name type="common">Sweet pea</name>
    <dbReference type="NCBI Taxonomy" id="3859"/>
</organismHost>
<organismHost>
    <name type="scientific">Lens culinaris</name>
    <name type="common">Lentil</name>
    <name type="synonym">Cicer lens</name>
    <dbReference type="NCBI Taxonomy" id="3864"/>
</organismHost>
<organismHost>
    <name type="scientific">Medicago arabica</name>
    <dbReference type="NCBI Taxonomy" id="70936"/>
</organismHost>
<organismHost>
    <name type="scientific">Pisum sativum</name>
    <name type="common">Garden pea</name>
    <name type="synonym">Lathyrus oleraceus</name>
    <dbReference type="NCBI Taxonomy" id="3888"/>
</organismHost>
<organismHost>
    <name type="scientific">Trifolium incarnatum</name>
    <name type="common">Crimson clover</name>
    <dbReference type="NCBI Taxonomy" id="60916"/>
</organismHost>
<organismHost>
    <name type="scientific">Vicia faba</name>
    <name type="common">Broad bean</name>
    <name type="synonym">Faba vulgaris</name>
    <dbReference type="NCBI Taxonomy" id="3906"/>
</organismHost>
<organismHost>
    <name type="scientific">Vicia sativa</name>
    <name type="common">Spring vetch</name>
    <name type="synonym">Tare</name>
    <dbReference type="NCBI Taxonomy" id="3908"/>
</organismHost>
<proteinExistence type="evidence at protein level"/>
<evidence type="ECO:0000256" key="1">
    <source>
        <dbReference type="SAM" id="MobiDB-lite"/>
    </source>
</evidence>
<evidence type="ECO:0000269" key="2">
    <source>
    </source>
</evidence>
<evidence type="ECO:0000305" key="3"/>
<reference key="1">
    <citation type="journal article" date="1991" name="J. Gen. Virol.">
        <title>The nucleotide sequence and luteovirus-like nature of RNA 1 of an aphid non-transmissible strain of pea enation mosaic virus.</title>
        <authorList>
            <person name="Demler S.A."/>
            <person name="de Zoeten G.A."/>
        </authorList>
    </citation>
    <scope>NUCLEOTIDE SEQUENCE [GENOMIC RNA]</scope>
    <scope>PROTEIN SEQUENCE OF 2-21</scope>
</reference>
<gene>
    <name type="ORF">ORF3</name>
</gene>
<protein>
    <recommendedName>
        <fullName>Major capsid protein</fullName>
    </recommendedName>
    <alternativeName>
        <fullName>Coat protein</fullName>
        <shortName>CP</shortName>
    </alternativeName>
</protein>
<sequence length="189" mass="21128">MPTRSRSKANQRRRRPRRVVVVAPSMAQPRTQSRRPRRRNKRGGGLNGSHTVDFSMVHGPFNGNATGTVKFGPSSDCQCIKGNLAAYQKYRIVWLKVVYQSEAAATDRGCIAYHVDTSTTKKAADVVLLDTWNIRSNGSATFGREILGDQPWYESNKDQFFFLYRGTGGTDVAGHYRISGRIQLMNASL</sequence>
<dbReference type="EMBL" id="L04573">
    <property type="protein sequence ID" value="AAA72301.1"/>
    <property type="molecule type" value="Genomic_RNA"/>
</dbReference>
<dbReference type="PIR" id="JQ1385">
    <property type="entry name" value="VCXBPM"/>
</dbReference>
<dbReference type="RefSeq" id="NP_619738.1">
    <property type="nucleotide sequence ID" value="NC_003629.1"/>
</dbReference>
<dbReference type="SMR" id="P29153"/>
<dbReference type="KEGG" id="vg:940253"/>
<dbReference type="Proteomes" id="UP000000519">
    <property type="component" value="Segment"/>
</dbReference>
<dbReference type="GO" id="GO:0039617">
    <property type="term" value="C:T=3 icosahedral viral capsid"/>
    <property type="evidence" value="ECO:0007669"/>
    <property type="project" value="UniProtKB-KW"/>
</dbReference>
<dbReference type="GO" id="GO:0005198">
    <property type="term" value="F:structural molecule activity"/>
    <property type="evidence" value="ECO:0007669"/>
    <property type="project" value="InterPro"/>
</dbReference>
<dbReference type="Gene3D" id="2.60.120.20">
    <property type="match status" value="1"/>
</dbReference>
<dbReference type="InterPro" id="IPR001517">
    <property type="entry name" value="Luteo_coat"/>
</dbReference>
<dbReference type="InterPro" id="IPR029053">
    <property type="entry name" value="Viral_coat"/>
</dbReference>
<dbReference type="Pfam" id="PF00894">
    <property type="entry name" value="Luteo_coat"/>
    <property type="match status" value="1"/>
</dbReference>
<dbReference type="PRINTS" id="PR00915">
    <property type="entry name" value="LUTEOGP1COAT"/>
</dbReference>
<keyword id="KW-0167">Capsid protein</keyword>
<keyword id="KW-0903">Direct protein sequencing</keyword>
<keyword id="KW-1185">Reference proteome</keyword>
<keyword id="KW-1142">T=3 icosahedral capsid protein</keyword>
<keyword id="KW-0946">Virion</keyword>